<protein>
    <recommendedName>
        <fullName evidence="4">Short-chain dehydrogenase/reductase phqE</fullName>
        <ecNumber evidence="6">1.1.-.-</ecNumber>
    </recommendedName>
    <alternativeName>
        <fullName evidence="4">Paraherquamide biosynthesis cluster protein E</fullName>
    </alternativeName>
</protein>
<organism>
    <name type="scientific">Penicillium fellutanum</name>
    <dbReference type="NCBI Taxonomy" id="70095"/>
    <lineage>
        <taxon>Eukaryota</taxon>
        <taxon>Fungi</taxon>
        <taxon>Dikarya</taxon>
        <taxon>Ascomycota</taxon>
        <taxon>Pezizomycotina</taxon>
        <taxon>Eurotiomycetes</taxon>
        <taxon>Eurotiomycetidae</taxon>
        <taxon>Eurotiales</taxon>
        <taxon>Aspergillaceae</taxon>
        <taxon>Penicillium</taxon>
    </lineage>
</organism>
<name>PHQE_PENFE</name>
<sequence>MTPAPTPRTDQLHGSRVLVIGGTSGIGFAVCAAALGHGAIVTIVGSNAQKLKDSVARLKSSFPSTDPDDIVAVRCDLSNSDTVEQDIEKALQLAAGNSKINHIVITAADMTAPPPLEDLTVDSVQRPGIIRLVAPLMVAKHLPKYMNKCPQSSLTLTSGAHCLRPDPGWTVISGYCGAVEAMSRGLAIDLKPLRVNVVAPGAVLTEAVKDILGDAYDAAVEMAEAKSTVGQTGSPESVAQAYIYLMKDHYASGSVVSTNGGMLLV</sequence>
<accession>L0E2Z4</accession>
<keyword id="KW-0002">3D-structure</keyword>
<keyword id="KW-0017">Alkaloid metabolism</keyword>
<keyword id="KW-0472">Membrane</keyword>
<keyword id="KW-0521">NADP</keyword>
<keyword id="KW-0560">Oxidoreductase</keyword>
<keyword id="KW-0812">Transmembrane</keyword>
<keyword id="KW-1133">Transmembrane helix</keyword>
<feature type="chain" id="PRO_0000448869" description="Short-chain dehydrogenase/reductase phqE">
    <location>
        <begin position="1"/>
        <end position="265"/>
    </location>
</feature>
<feature type="transmembrane region" description="Helical" evidence="1">
    <location>
        <begin position="25"/>
        <end position="45"/>
    </location>
</feature>
<feature type="binding site" evidence="3 8">
    <location>
        <position position="23"/>
    </location>
    <ligand>
        <name>NADP(+)</name>
        <dbReference type="ChEBI" id="CHEBI:58349"/>
    </ligand>
</feature>
<feature type="binding site" evidence="3 7 8">
    <location>
        <position position="24"/>
    </location>
    <ligand>
        <name>NADP(+)</name>
        <dbReference type="ChEBI" id="CHEBI:58349"/>
    </ligand>
</feature>
<feature type="binding site" evidence="3 7 8">
    <location>
        <position position="26"/>
    </location>
    <ligand>
        <name>NADP(+)</name>
        <dbReference type="ChEBI" id="CHEBI:58349"/>
    </ligand>
</feature>
<feature type="binding site" evidence="3 7 8">
    <location>
        <position position="46"/>
    </location>
    <ligand>
        <name>NADP(+)</name>
        <dbReference type="ChEBI" id="CHEBI:58349"/>
    </ligand>
</feature>
<feature type="binding site" evidence="3 7 8">
    <location>
        <position position="47"/>
    </location>
    <ligand>
        <name>NADP(+)</name>
        <dbReference type="ChEBI" id="CHEBI:58349"/>
    </ligand>
</feature>
<feature type="binding site" evidence="3 7 8">
    <location>
        <position position="50"/>
    </location>
    <ligand>
        <name>NADP(+)</name>
        <dbReference type="ChEBI" id="CHEBI:58349"/>
    </ligand>
</feature>
<feature type="binding site" evidence="3 8">
    <location>
        <position position="76"/>
    </location>
    <ligand>
        <name>NADP(+)</name>
        <dbReference type="ChEBI" id="CHEBI:58349"/>
    </ligand>
</feature>
<feature type="binding site" evidence="3 7">
    <location>
        <position position="131"/>
    </location>
    <ligand>
        <name>NADP(+)</name>
        <dbReference type="ChEBI" id="CHEBI:58349"/>
    </ligand>
</feature>
<feature type="binding site" evidence="3 7 8">
    <location>
        <position position="203"/>
    </location>
    <ligand>
        <name>NADP(+)</name>
        <dbReference type="ChEBI" id="CHEBI:58349"/>
    </ligand>
</feature>
<feature type="binding site" evidence="3 7 8">
    <location>
        <position position="205"/>
    </location>
    <ligand>
        <name>NADP(+)</name>
        <dbReference type="ChEBI" id="CHEBI:58349"/>
    </ligand>
</feature>
<feature type="turn" evidence="10">
    <location>
        <begin position="11"/>
        <end position="14"/>
    </location>
</feature>
<feature type="strand" evidence="10">
    <location>
        <begin position="16"/>
        <end position="20"/>
    </location>
</feature>
<feature type="turn" evidence="9">
    <location>
        <begin position="21"/>
        <end position="23"/>
    </location>
</feature>
<feature type="helix" evidence="10">
    <location>
        <begin position="25"/>
        <end position="36"/>
    </location>
</feature>
<feature type="strand" evidence="10">
    <location>
        <begin position="40"/>
        <end position="46"/>
    </location>
</feature>
<feature type="helix" evidence="10">
    <location>
        <begin position="48"/>
        <end position="61"/>
    </location>
</feature>
<feature type="helix" evidence="10">
    <location>
        <begin position="67"/>
        <end position="69"/>
    </location>
</feature>
<feature type="strand" evidence="10">
    <location>
        <begin position="70"/>
        <end position="74"/>
    </location>
</feature>
<feature type="turn" evidence="10">
    <location>
        <begin position="80"/>
        <end position="82"/>
    </location>
</feature>
<feature type="helix" evidence="10">
    <location>
        <begin position="83"/>
        <end position="95"/>
    </location>
</feature>
<feature type="strand" evidence="10">
    <location>
        <begin position="102"/>
        <end position="105"/>
    </location>
</feature>
<feature type="helix" evidence="10">
    <location>
        <begin position="116"/>
        <end position="118"/>
    </location>
</feature>
<feature type="helix" evidence="10">
    <location>
        <begin position="121"/>
        <end position="125"/>
    </location>
</feature>
<feature type="helix" evidence="10">
    <location>
        <begin position="128"/>
        <end position="131"/>
    </location>
</feature>
<feature type="helix" evidence="10">
    <location>
        <begin position="133"/>
        <end position="141"/>
    </location>
</feature>
<feature type="helix" evidence="10">
    <location>
        <begin position="142"/>
        <end position="144"/>
    </location>
</feature>
<feature type="strand" evidence="10">
    <location>
        <begin position="153"/>
        <end position="157"/>
    </location>
</feature>
<feature type="helix" evidence="10">
    <location>
        <begin position="160"/>
        <end position="162"/>
    </location>
</feature>
<feature type="helix" evidence="10">
    <location>
        <begin position="170"/>
        <end position="189"/>
    </location>
</feature>
<feature type="turn" evidence="10">
    <location>
        <begin position="190"/>
        <end position="192"/>
    </location>
</feature>
<feature type="strand" evidence="10">
    <location>
        <begin position="193"/>
        <end position="200"/>
    </location>
</feature>
<feature type="helix" evidence="10">
    <location>
        <begin position="206"/>
        <end position="212"/>
    </location>
</feature>
<feature type="helix" evidence="10">
    <location>
        <begin position="213"/>
        <end position="215"/>
    </location>
</feature>
<feature type="helix" evidence="10">
    <location>
        <begin position="216"/>
        <end position="225"/>
    </location>
</feature>
<feature type="strand" evidence="10">
    <location>
        <begin position="226"/>
        <end position="231"/>
    </location>
</feature>
<feature type="helix" evidence="10">
    <location>
        <begin position="235"/>
        <end position="247"/>
    </location>
</feature>
<feature type="strand" evidence="10">
    <location>
        <begin position="255"/>
        <end position="259"/>
    </location>
</feature>
<feature type="helix" evidence="10">
    <location>
        <begin position="262"/>
        <end position="264"/>
    </location>
</feature>
<gene>
    <name evidence="4" type="primary">phqE</name>
</gene>
<comment type="function">
    <text evidence="2 3 6">Short-chain dehydrogenase/reductase; part of the gene cluster that mediates the biosynthesis of paraherquamide, a fungal indole alkaloid that belongs to a family of natural products containing a characteristic bicyclo[2.2.2]diazaoctane core (PubMed:23213353). The first steps in the biosynthesis of paraherquamide is the production of the beta-methyl-proline precursor from L-isoleucine (Probable). They require oxidation of a terminally hydroxylated L-isoleucine to the corresponding aldehyde by enzymes which have still to be identified (Probable). Spontaneous cyclization and dehydration would yield the 4-methyl pyrolline-5-carboxylic acid, which is then reduced by the pyrroline-5-carboxylate reductase phqD leading to the beta-methyl-proline precursor (Probable). The next step of paraherquamide biosynthesis involves coupling of beta-methyl-proline and L-tryptophan by the bimodular NRPS phqB, to produce a monooxopiperazine intermediate (Probable). The reductase (R) domain of phqB utilizes NADPH for hydride transfer to reduce the thioester bond of the T domain-tethered linear dipeptide to a hemithioaminal intermediate, which spontaneously cleaves the C-S bond to release the aldehyde product (PubMed:31548667). This compound undergoes spontaneous cyclization and dehydration to give a dienamine which is reverse prenylated at C-2 by the reverse prenyltransferase phqJ (Probable). The other prenyltransferase present in the cluster, phqI may be a redundant gene in the pathway (Probable). During biosynthetic assembly, the key step to produce the polycyclic core is catalyzed by the bifunctional reductase and intramolecular [4+2] Diels-Alderase, phqE, resulting in formation of the [2.2.2] diazaoctane intermediate preparaherquamide (PubMed:31548667). Following formation of preparaherquamide, an indole 2,3-epoxidation-initiated pinacol-like rearrangement is catalyzed by the phqK FAD-dependent monooxygenase (Probable). The prenyltransferase phqA, the cytochrome P450 monooxygenase phqL, and the FAD-linked oxidoreductase phqH (or the cytochrome P450 monooxygenase phqM), are proposed to be involved in the formation of the pyran ring (Probable). The FAD-dependent monooxygenase phqK is likely responsible for generation of the spiro-oxindole, and the N-methylation is likely mediated by the phqN methyltransferase leading to the isolable natural product paraherquamide F (Probable). However, the order of these biosynthetic steps has still to be determined (Probable). In late-stage paraherquamide biosynthesis, the third P450 monooxygenase, phqO, is probably responsible for the C-14 hydroxylation, transforming paraherquamide F to paraherquamide G, and paraherquamide E to the final product paraherquamide A (Probable). The expansion from the 6-membered ring pyran (in paraherquamides F and G) to the 7-membered dioxepin ring (in paraherquamides A and E) represents a poorly understood but intriguing process that probably involves the 2-oxoglutarate-dependent dioxygenase phqC (Probable). Finally, the remaining members of the paraherquamide cluster, including phqI as well as phqM (or phqH), do not have a clearly prescribed role and appear to be redundant (Probable).</text>
</comment>
<comment type="cofactor">
    <cofactor evidence="3">
        <name>NADP(+)</name>
        <dbReference type="ChEBI" id="CHEBI:58349"/>
    </cofactor>
</comment>
<comment type="pathway">
    <text evidence="6">Alkaloid biosynthesis.</text>
</comment>
<comment type="subcellular location">
    <subcellularLocation>
        <location evidence="1">Membrane</location>
        <topology evidence="1">Single-pass membrane protein</topology>
    </subcellularLocation>
</comment>
<comment type="similarity">
    <text evidence="5">Belongs to the short-chain dehydrogenases/reductases (SDR) family.</text>
</comment>
<proteinExistence type="evidence at protein level"/>
<dbReference type="EC" id="1.1.-.-" evidence="6"/>
<dbReference type="EMBL" id="JQ708195">
    <property type="protein sequence ID" value="AGA37272.1"/>
    <property type="molecule type" value="Genomic_DNA"/>
</dbReference>
<dbReference type="PDB" id="6NKK">
    <property type="method" value="X-ray"/>
    <property type="resolution" value="2.30 A"/>
    <property type="chains" value="A/B/C/D/E/F=1-265"/>
</dbReference>
<dbReference type="PDB" id="6NKM">
    <property type="method" value="X-ray"/>
    <property type="resolution" value="1.90 A"/>
    <property type="chains" value="A/B/C/D/E/F=1-265"/>
</dbReference>
<dbReference type="PDBsum" id="6NKK"/>
<dbReference type="PDBsum" id="6NKM"/>
<dbReference type="SMR" id="L0E2Z4"/>
<dbReference type="GO" id="GO:0016020">
    <property type="term" value="C:membrane"/>
    <property type="evidence" value="ECO:0007669"/>
    <property type="project" value="UniProtKB-SubCell"/>
</dbReference>
<dbReference type="GO" id="GO:0016491">
    <property type="term" value="F:oxidoreductase activity"/>
    <property type="evidence" value="ECO:0007669"/>
    <property type="project" value="UniProtKB-KW"/>
</dbReference>
<dbReference type="GO" id="GO:0009820">
    <property type="term" value="P:alkaloid metabolic process"/>
    <property type="evidence" value="ECO:0007669"/>
    <property type="project" value="UniProtKB-KW"/>
</dbReference>
<dbReference type="CDD" id="cd05233">
    <property type="entry name" value="SDR_c"/>
    <property type="match status" value="1"/>
</dbReference>
<dbReference type="Gene3D" id="3.40.50.720">
    <property type="entry name" value="NAD(P)-binding Rossmann-like Domain"/>
    <property type="match status" value="1"/>
</dbReference>
<dbReference type="InterPro" id="IPR036291">
    <property type="entry name" value="NAD(P)-bd_dom_sf"/>
</dbReference>
<dbReference type="InterPro" id="IPR002347">
    <property type="entry name" value="SDR_fam"/>
</dbReference>
<dbReference type="InterPro" id="IPR051122">
    <property type="entry name" value="SDR_superfamily_enzyme"/>
</dbReference>
<dbReference type="PANTHER" id="PTHR43477">
    <property type="entry name" value="DIHYDROANTICAPSIN 7-DEHYDROGENASE"/>
    <property type="match status" value="1"/>
</dbReference>
<dbReference type="PANTHER" id="PTHR43477:SF1">
    <property type="entry name" value="DIHYDROANTICAPSIN 7-DEHYDROGENASE"/>
    <property type="match status" value="1"/>
</dbReference>
<dbReference type="Pfam" id="PF23441">
    <property type="entry name" value="SDR"/>
    <property type="match status" value="1"/>
</dbReference>
<dbReference type="PRINTS" id="PR00081">
    <property type="entry name" value="GDHRDH"/>
</dbReference>
<dbReference type="SUPFAM" id="SSF51735">
    <property type="entry name" value="NAD(P)-binding Rossmann-fold domains"/>
    <property type="match status" value="1"/>
</dbReference>
<evidence type="ECO:0000255" key="1"/>
<evidence type="ECO:0000269" key="2">
    <source>
    </source>
</evidence>
<evidence type="ECO:0000269" key="3">
    <source>
    </source>
</evidence>
<evidence type="ECO:0000303" key="4">
    <source>
    </source>
</evidence>
<evidence type="ECO:0000305" key="5"/>
<evidence type="ECO:0000305" key="6">
    <source>
    </source>
</evidence>
<evidence type="ECO:0007744" key="7">
    <source>
        <dbReference type="PDB" id="6NKK"/>
    </source>
</evidence>
<evidence type="ECO:0007744" key="8">
    <source>
        <dbReference type="PDB" id="6NKM"/>
    </source>
</evidence>
<evidence type="ECO:0007829" key="9">
    <source>
        <dbReference type="PDB" id="6NKK"/>
    </source>
</evidence>
<evidence type="ECO:0007829" key="10">
    <source>
        <dbReference type="PDB" id="6NKM"/>
    </source>
</evidence>
<reference key="1">
    <citation type="journal article" date="2012" name="Med. Chem. Commun.">
        <title>Comparative analysis of the biosynthetic systems for fungal bicyclo[2.2.2]diazaoctane indole alkaloids: the (+)/(-)-notoamide, paraherquamide and malbrancheamide pathways.</title>
        <authorList>
            <person name="Li S."/>
            <person name="Anand K."/>
            <person name="Tran H."/>
            <person name="Yu F."/>
            <person name="Finefield J.M."/>
            <person name="Sunderhaus J.D."/>
            <person name="McAfoos T.J."/>
            <person name="Tsukamoto S."/>
            <person name="Williams R.M."/>
            <person name="Sherman D.H."/>
        </authorList>
    </citation>
    <scope>NUCLEOTIDE SEQUENCE [GENOMIC DNA]</scope>
    <scope>FUNCTION</scope>
    <scope>PATHWAY</scope>
    <source>
        <strain>ATCC 20841 / MF5123</strain>
    </source>
</reference>
<reference evidence="7 8" key="2">
    <citation type="journal article" date="2019" name="Nat. Chem.">
        <title>Fungal indole alkaloid biogenesis through evolution of a bifunctional reductase/Diels-Alderase.</title>
        <authorList>
            <person name="Dan Q."/>
            <person name="Newmister S.A."/>
            <person name="Klas K.R."/>
            <person name="Fraley A.E."/>
            <person name="McAfoos T.J."/>
            <person name="Somoza A.D."/>
            <person name="Sunderhaus J.D."/>
            <person name="Ye Y."/>
            <person name="Shende V.V."/>
            <person name="Yu F."/>
            <person name="Sanders J.N."/>
            <person name="Brown W.C."/>
            <person name="Zhao L."/>
            <person name="Paton R.S."/>
            <person name="Houk K.N."/>
            <person name="Smith J.L."/>
            <person name="Sherman D.H."/>
            <person name="Williams R.M."/>
        </authorList>
    </citation>
    <scope>X-RAY CRYSTALLOGRAPHY (1.9 ANGSTROMS) IN COMPLEX WITH COFACTOR AND SUBSTRATE</scope>
    <scope>FUNCTION</scope>
    <scope>COFACTOR</scope>
    <scope>CATALYTIC ACTIVITY</scope>
    <scope>PATHWAY</scope>
</reference>